<name>ERG3_MYCTU</name>
<accession>P9WNZ9</accession>
<accession>L0TAG8</accession>
<accession>P68435</accession>
<accession>Q50619</accession>
<dbReference type="EC" id="1.3.-.-"/>
<dbReference type="EMBL" id="AL123456">
    <property type="protein sequence ID" value="CCP44580.1"/>
    <property type="molecule type" value="Genomic_DNA"/>
</dbReference>
<dbReference type="PIR" id="G70719">
    <property type="entry name" value="G70719"/>
</dbReference>
<dbReference type="RefSeq" id="NP_216330.1">
    <property type="nucleotide sequence ID" value="NC_000962.3"/>
</dbReference>
<dbReference type="RefSeq" id="WP_003901259.1">
    <property type="nucleotide sequence ID" value="NC_000962.3"/>
</dbReference>
<dbReference type="FunCoup" id="P9WNZ9">
    <property type="interactions" value="36"/>
</dbReference>
<dbReference type="STRING" id="83332.Rv1814"/>
<dbReference type="PaxDb" id="83332-Rv1814"/>
<dbReference type="DNASU" id="885880"/>
<dbReference type="GeneID" id="885880"/>
<dbReference type="KEGG" id="mtu:Rv1814"/>
<dbReference type="KEGG" id="mtv:RVBD_1814"/>
<dbReference type="PATRIC" id="fig|83332.111.peg.2019"/>
<dbReference type="TubercuList" id="Rv1814"/>
<dbReference type="eggNOG" id="COG3000">
    <property type="taxonomic scope" value="Bacteria"/>
</dbReference>
<dbReference type="InParanoid" id="P9WNZ9"/>
<dbReference type="OrthoDB" id="9770329at2"/>
<dbReference type="PhylomeDB" id="P9WNZ9"/>
<dbReference type="Proteomes" id="UP000001584">
    <property type="component" value="Chromosome"/>
</dbReference>
<dbReference type="GO" id="GO:0005886">
    <property type="term" value="C:plasma membrane"/>
    <property type="evidence" value="ECO:0007669"/>
    <property type="project" value="UniProtKB-SubCell"/>
</dbReference>
<dbReference type="GO" id="GO:0005506">
    <property type="term" value="F:iron ion binding"/>
    <property type="evidence" value="ECO:0007669"/>
    <property type="project" value="InterPro"/>
</dbReference>
<dbReference type="GO" id="GO:0016491">
    <property type="term" value="F:oxidoreductase activity"/>
    <property type="evidence" value="ECO:0007669"/>
    <property type="project" value="UniProtKB-KW"/>
</dbReference>
<dbReference type="GO" id="GO:0016126">
    <property type="term" value="P:sterol biosynthetic process"/>
    <property type="evidence" value="ECO:0007669"/>
    <property type="project" value="UniProtKB-KW"/>
</dbReference>
<dbReference type="InterPro" id="IPR006694">
    <property type="entry name" value="Fatty_acid_hydroxylase"/>
</dbReference>
<dbReference type="InterPro" id="IPR051689">
    <property type="entry name" value="Sterol_desaturase/TMEM195"/>
</dbReference>
<dbReference type="PANTHER" id="PTHR21624:SF1">
    <property type="entry name" value="ALKYLGLYCEROL MONOOXYGENASE"/>
    <property type="match status" value="1"/>
</dbReference>
<dbReference type="PANTHER" id="PTHR21624">
    <property type="entry name" value="STEROL DESATURASE-RELATED PROTEIN"/>
    <property type="match status" value="1"/>
</dbReference>
<dbReference type="Pfam" id="PF04116">
    <property type="entry name" value="FA_hydroxylase"/>
    <property type="match status" value="1"/>
</dbReference>
<protein>
    <recommendedName>
        <fullName>C-5 sterol desaturase</fullName>
        <ecNumber>1.3.-.-</ecNumber>
    </recommendedName>
    <alternativeName>
        <fullName>Sterol-C5-desaturase</fullName>
    </alternativeName>
</protein>
<gene>
    <name type="primary">erg3</name>
    <name type="ordered locus">Rv1814</name>
    <name type="ORF">MTCY1A11.29c</name>
</gene>
<feature type="chain" id="PRO_0000117041" description="C-5 sterol desaturase">
    <location>
        <begin position="1"/>
        <end position="300"/>
    </location>
</feature>
<feature type="transmembrane region" description="Helical" evidence="1">
    <location>
        <begin position="3"/>
        <end position="23"/>
    </location>
</feature>
<feature type="transmembrane region" description="Helical" evidence="1">
    <location>
        <begin position="68"/>
        <end position="88"/>
    </location>
</feature>
<feature type="transmembrane region" description="Helical" evidence="1">
    <location>
        <begin position="91"/>
        <end position="111"/>
    </location>
</feature>
<feature type="transmembrane region" description="Helical" evidence="1">
    <location>
        <begin position="147"/>
        <end position="167"/>
    </location>
</feature>
<feature type="domain" description="Fatty acid hydroxylase" evidence="1">
    <location>
        <begin position="94"/>
        <end position="227"/>
    </location>
</feature>
<evidence type="ECO:0000255" key="1"/>
<evidence type="ECO:0000305" key="2"/>
<keyword id="KW-1003">Cell membrane</keyword>
<keyword id="KW-0444">Lipid biosynthesis</keyword>
<keyword id="KW-0443">Lipid metabolism</keyword>
<keyword id="KW-0472">Membrane</keyword>
<keyword id="KW-0560">Oxidoreductase</keyword>
<keyword id="KW-1185">Reference proteome</keyword>
<keyword id="KW-0752">Steroid biosynthesis</keyword>
<keyword id="KW-0753">Steroid metabolism</keyword>
<keyword id="KW-0756">Sterol biosynthesis</keyword>
<keyword id="KW-1207">Sterol metabolism</keyword>
<keyword id="KW-0812">Transmembrane</keyword>
<keyword id="KW-1133">Transmembrane helix</keyword>
<comment type="subcellular location">
    <subcellularLocation>
        <location evidence="2">Cell membrane</location>
        <topology evidence="2">Multi-pass membrane protein</topology>
    </subcellularLocation>
</comment>
<comment type="similarity">
    <text evidence="2">Belongs to the sterol desaturase family.</text>
</comment>
<proteinExistence type="inferred from homology"/>
<reference key="1">
    <citation type="journal article" date="1998" name="Nature">
        <title>Deciphering the biology of Mycobacterium tuberculosis from the complete genome sequence.</title>
        <authorList>
            <person name="Cole S.T."/>
            <person name="Brosch R."/>
            <person name="Parkhill J."/>
            <person name="Garnier T."/>
            <person name="Churcher C.M."/>
            <person name="Harris D.E."/>
            <person name="Gordon S.V."/>
            <person name="Eiglmeier K."/>
            <person name="Gas S."/>
            <person name="Barry C.E. III"/>
            <person name="Tekaia F."/>
            <person name="Badcock K."/>
            <person name="Basham D."/>
            <person name="Brown D."/>
            <person name="Chillingworth T."/>
            <person name="Connor R."/>
            <person name="Davies R.M."/>
            <person name="Devlin K."/>
            <person name="Feltwell T."/>
            <person name="Gentles S."/>
            <person name="Hamlin N."/>
            <person name="Holroyd S."/>
            <person name="Hornsby T."/>
            <person name="Jagels K."/>
            <person name="Krogh A."/>
            <person name="McLean J."/>
            <person name="Moule S."/>
            <person name="Murphy L.D."/>
            <person name="Oliver S."/>
            <person name="Osborne J."/>
            <person name="Quail M.A."/>
            <person name="Rajandream M.A."/>
            <person name="Rogers J."/>
            <person name="Rutter S."/>
            <person name="Seeger K."/>
            <person name="Skelton S."/>
            <person name="Squares S."/>
            <person name="Squares R."/>
            <person name="Sulston J.E."/>
            <person name="Taylor K."/>
            <person name="Whitehead S."/>
            <person name="Barrell B.G."/>
        </authorList>
    </citation>
    <scope>NUCLEOTIDE SEQUENCE [LARGE SCALE GENOMIC DNA]</scope>
    <source>
        <strain>ATCC 25618 / H37Rv</strain>
    </source>
</reference>
<organism>
    <name type="scientific">Mycobacterium tuberculosis (strain ATCC 25618 / H37Rv)</name>
    <dbReference type="NCBI Taxonomy" id="83332"/>
    <lineage>
        <taxon>Bacteria</taxon>
        <taxon>Bacillati</taxon>
        <taxon>Actinomycetota</taxon>
        <taxon>Actinomycetes</taxon>
        <taxon>Mycobacteriales</taxon>
        <taxon>Mycobacteriaceae</taxon>
        <taxon>Mycobacterium</taxon>
        <taxon>Mycobacterium tuberculosis complex</taxon>
    </lineage>
</organism>
<sequence>MRDPVLFAIPCFLLLLILEWTAARKLESIETAATGQPRPASGAYLTRDSVASISMGLVSIATTAGWKSLALLGYAAIYAYLAPWQLSAHRWYTWVIAIVGVDLLYYSYHRIAHRVRLIWATHQAHHSSEYFNFATALRQKWNNSGEILMWVPLPLMGLPPWMVFCSWSLNLIYQFWVHTERIDRLPRWFEFVFNTPSHHRVHHGMDPVYLDKNYGGILIIWDRLFGSFQPELFRPHYGLTKRVDTFNIWKLQTREYVAIVRDWRSATRLRDRLGYVFGPPGWEPRTIDKSNAAASLVTSR</sequence>